<proteinExistence type="evidence at transcript level"/>
<gene>
    <name evidence="2" type="primary">CIAO2A</name>
    <name type="synonym">FAM96A</name>
</gene>
<protein>
    <recommendedName>
        <fullName evidence="3">Cytosolic iron-sulfur assembly component 2A</fullName>
    </recommendedName>
    <alternativeName>
        <fullName>MIP18 family protein FAM96A</fullName>
    </alternativeName>
</protein>
<evidence type="ECO:0000250" key="1"/>
<evidence type="ECO:0000250" key="2">
    <source>
        <dbReference type="UniProtKB" id="Q9H5X1"/>
    </source>
</evidence>
<evidence type="ECO:0000305" key="3"/>
<accession>Q3T0U7</accession>
<name>CIA2A_BOVIN</name>
<comment type="function">
    <text evidence="1 2">Component of the cytosolic iron-sulfur protein assembly (CIA) complex, a multiprotein complex that mediates the incorporation of iron-sulfur cluster into extramitochondrial Fe/S proteins. As a CIA complex component and in collaboration with CIAO1 specifically matures ACO1 and stabilizes IREB2, connecting cytosolic iron-sulfur protein maturation with cellular iron regulation. May play a role in chromosome segregation through establishment of sister chromatid cohesion. May induce apoptosis in collaboration with APAF1.</text>
</comment>
<comment type="subunit">
    <text evidence="2">Monomer and homodimer. Component of the CIA complex. Interacts with CIAO1. Interacts with IREB2. Interacts with APAF1.</text>
</comment>
<comment type="subcellular location">
    <subcellularLocation>
        <location evidence="2">Cytoplasm</location>
    </subcellularLocation>
</comment>
<comment type="similarity">
    <text evidence="3">Belongs to the MIP18 family.</text>
</comment>
<dbReference type="EMBL" id="BC102256">
    <property type="protein sequence ID" value="AAI02257.1"/>
    <property type="molecule type" value="mRNA"/>
</dbReference>
<dbReference type="RefSeq" id="NP_001030282.1">
    <property type="nucleotide sequence ID" value="NM_001035110.1"/>
</dbReference>
<dbReference type="BMRB" id="Q3T0U7"/>
<dbReference type="SMR" id="Q3T0U7"/>
<dbReference type="FunCoup" id="Q3T0U7">
    <property type="interactions" value="3250"/>
</dbReference>
<dbReference type="STRING" id="9913.ENSBTAP00000002607"/>
<dbReference type="PaxDb" id="9913-ENSBTAP00000002607"/>
<dbReference type="GeneID" id="512871"/>
<dbReference type="KEGG" id="bta:512871"/>
<dbReference type="CTD" id="84191"/>
<dbReference type="eggNOG" id="KOG3381">
    <property type="taxonomic scope" value="Eukaryota"/>
</dbReference>
<dbReference type="InParanoid" id="Q3T0U7"/>
<dbReference type="OrthoDB" id="2746at2759"/>
<dbReference type="Proteomes" id="UP000009136">
    <property type="component" value="Unplaced"/>
</dbReference>
<dbReference type="GO" id="GO:0097361">
    <property type="term" value="C:cytosolic [4Fe-4S] assembly targeting complex"/>
    <property type="evidence" value="ECO:0000250"/>
    <property type="project" value="UniProtKB"/>
</dbReference>
<dbReference type="GO" id="GO:0046872">
    <property type="term" value="F:metal ion binding"/>
    <property type="evidence" value="ECO:0007669"/>
    <property type="project" value="UniProtKB-KW"/>
</dbReference>
<dbReference type="GO" id="GO:0007059">
    <property type="term" value="P:chromosome segregation"/>
    <property type="evidence" value="ECO:0007669"/>
    <property type="project" value="UniProtKB-KW"/>
</dbReference>
<dbReference type="GO" id="GO:0051604">
    <property type="term" value="P:protein maturation"/>
    <property type="evidence" value="ECO:0000250"/>
    <property type="project" value="UniProtKB"/>
</dbReference>
<dbReference type="FunFam" id="3.30.300.130:FF:000004">
    <property type="entry name" value="cytosolic iron-sulfur assembly component 2A"/>
    <property type="match status" value="1"/>
</dbReference>
<dbReference type="Gene3D" id="6.10.250.1280">
    <property type="match status" value="1"/>
</dbReference>
<dbReference type="Gene3D" id="3.30.300.130">
    <property type="entry name" value="Fe-S cluster assembly (FSCA)"/>
    <property type="match status" value="1"/>
</dbReference>
<dbReference type="InterPro" id="IPR034904">
    <property type="entry name" value="FSCA_dom_sf"/>
</dbReference>
<dbReference type="InterPro" id="IPR039796">
    <property type="entry name" value="MIP18"/>
</dbReference>
<dbReference type="InterPro" id="IPR002744">
    <property type="entry name" value="MIP18-like"/>
</dbReference>
<dbReference type="PANTHER" id="PTHR12377:SF2">
    <property type="entry name" value="CYTOSOLIC IRON-SULFUR ASSEMBLY COMPONENT 2A"/>
    <property type="match status" value="1"/>
</dbReference>
<dbReference type="PANTHER" id="PTHR12377">
    <property type="entry name" value="CYTOSOLIC IRON-SULFUR ASSEMBLY COMPONENT 2B-RELATED"/>
    <property type="match status" value="1"/>
</dbReference>
<dbReference type="Pfam" id="PF01883">
    <property type="entry name" value="FeS_assembly_P"/>
    <property type="match status" value="1"/>
</dbReference>
<dbReference type="SUPFAM" id="SSF117916">
    <property type="entry name" value="Fe-S cluster assembly (FSCA) domain-like"/>
    <property type="match status" value="1"/>
</dbReference>
<organism>
    <name type="scientific">Bos taurus</name>
    <name type="common">Bovine</name>
    <dbReference type="NCBI Taxonomy" id="9913"/>
    <lineage>
        <taxon>Eukaryota</taxon>
        <taxon>Metazoa</taxon>
        <taxon>Chordata</taxon>
        <taxon>Craniata</taxon>
        <taxon>Vertebrata</taxon>
        <taxon>Euteleostomi</taxon>
        <taxon>Mammalia</taxon>
        <taxon>Eutheria</taxon>
        <taxon>Laurasiatheria</taxon>
        <taxon>Artiodactyla</taxon>
        <taxon>Ruminantia</taxon>
        <taxon>Pecora</taxon>
        <taxon>Bovidae</taxon>
        <taxon>Bovinae</taxon>
        <taxon>Bos</taxon>
    </lineage>
</organism>
<keyword id="KW-0159">Chromosome partition</keyword>
<keyword id="KW-0963">Cytoplasm</keyword>
<keyword id="KW-0479">Metal-binding</keyword>
<keyword id="KW-1185">Reference proteome</keyword>
<keyword id="KW-0862">Zinc</keyword>
<reference key="1">
    <citation type="submission" date="2005-08" db="EMBL/GenBank/DDBJ databases">
        <authorList>
            <consortium name="NIH - Mammalian Gene Collection (MGC) project"/>
        </authorList>
    </citation>
    <scope>NUCLEOTIDE SEQUENCE [LARGE SCALE MRNA]</scope>
    <source>
        <strain>Crossbred X Angus</strain>
        <tissue>Ileum</tissue>
    </source>
</reference>
<feature type="chain" id="PRO_0000245580" description="Cytosolic iron-sulfur assembly component 2A">
    <location>
        <begin position="1"/>
        <end position="160"/>
    </location>
</feature>
<feature type="binding site" evidence="1">
    <location>
        <position position="89"/>
    </location>
    <ligand>
        <name>Zn(2+)</name>
        <dbReference type="ChEBI" id="CHEBI:29105"/>
        <label>1</label>
        <note>ligand shared between dimeric partners</note>
    </ligand>
</feature>
<feature type="binding site" evidence="1">
    <location>
        <position position="89"/>
    </location>
    <ligand>
        <name>Zn(2+)</name>
        <dbReference type="ChEBI" id="CHEBI:29105"/>
        <label>2</label>
        <note>ligand shared between dimeric partners</note>
    </ligand>
</feature>
<feature type="binding site" evidence="1">
    <location>
        <position position="123"/>
    </location>
    <ligand>
        <name>Zn(2+)</name>
        <dbReference type="ChEBI" id="CHEBI:29105"/>
        <label>1</label>
        <note>ligand shared between dimeric partners</note>
    </ligand>
</feature>
<feature type="binding site" evidence="1">
    <location>
        <position position="123"/>
    </location>
    <ligand>
        <name>Zn(2+)</name>
        <dbReference type="ChEBI" id="CHEBI:29105"/>
        <label>2</label>
        <note>ligand shared between dimeric partners</note>
    </ligand>
</feature>
<feature type="binding site" evidence="1">
    <location>
        <position position="150"/>
    </location>
    <ligand>
        <name>Zn(2+)</name>
        <dbReference type="ChEBI" id="CHEBI:29105"/>
        <label>1</label>
        <note>ligand shared between dimeric partners</note>
    </ligand>
</feature>
<feature type="binding site" evidence="1">
    <location>
        <position position="150"/>
    </location>
    <ligand>
        <name>Zn(2+)</name>
        <dbReference type="ChEBI" id="CHEBI:29105"/>
        <label>2</label>
        <note>ligand shared between dimeric partners</note>
    </ligand>
</feature>
<feature type="binding site" evidence="1">
    <location>
        <position position="153"/>
    </location>
    <ligand>
        <name>Zn(2+)</name>
        <dbReference type="ChEBI" id="CHEBI:29105"/>
        <label>1</label>
        <note>ligand shared between dimeric partners</note>
    </ligand>
</feature>
<feature type="binding site" evidence="1">
    <location>
        <position position="153"/>
    </location>
    <ligand>
        <name>Zn(2+)</name>
        <dbReference type="ChEBI" id="CHEBI:29105"/>
        <label>2</label>
        <note>ligand shared between dimeric partners</note>
    </ligand>
</feature>
<sequence length="160" mass="18390">MERVSGLLSWTLSRFLWLSGLSEPGAARQPRIMEEKALEVYDLIRTIRDPEKPNTLEELEVVTESCVEVQEINEDDYLVIIRFTPTVPHCSLATLIGLCLRVKLQRCLPFKHKLEIYISEGTHSTEEDINKQINDKERVAAAMENPNLREIVEQCVLEPD</sequence>